<accession>Q3K2X2</accession>
<proteinExistence type="inferred from homology"/>
<feature type="chain" id="PRO_1000065213" description="Regulatory protein RecX">
    <location>
        <begin position="1"/>
        <end position="258"/>
    </location>
</feature>
<gene>
    <name evidence="1" type="primary">recX</name>
    <name type="ordered locus">SAK_0493</name>
</gene>
<reference key="1">
    <citation type="journal article" date="2005" name="Proc. Natl. Acad. Sci. U.S.A.">
        <title>Genome analysis of multiple pathogenic isolates of Streptococcus agalactiae: implications for the microbial 'pan-genome'.</title>
        <authorList>
            <person name="Tettelin H."/>
            <person name="Masignani V."/>
            <person name="Cieslewicz M.J."/>
            <person name="Donati C."/>
            <person name="Medini D."/>
            <person name="Ward N.L."/>
            <person name="Angiuoli S.V."/>
            <person name="Crabtree J."/>
            <person name="Jones A.L."/>
            <person name="Durkin A.S."/>
            <person name="DeBoy R.T."/>
            <person name="Davidsen T.M."/>
            <person name="Mora M."/>
            <person name="Scarselli M."/>
            <person name="Margarit y Ros I."/>
            <person name="Peterson J.D."/>
            <person name="Hauser C.R."/>
            <person name="Sundaram J.P."/>
            <person name="Nelson W.C."/>
            <person name="Madupu R."/>
            <person name="Brinkac L.M."/>
            <person name="Dodson R.J."/>
            <person name="Rosovitz M.J."/>
            <person name="Sullivan S.A."/>
            <person name="Daugherty S.C."/>
            <person name="Haft D.H."/>
            <person name="Selengut J."/>
            <person name="Gwinn M.L."/>
            <person name="Zhou L."/>
            <person name="Zafar N."/>
            <person name="Khouri H."/>
            <person name="Radune D."/>
            <person name="Dimitrov G."/>
            <person name="Watkins K."/>
            <person name="O'Connor K.J."/>
            <person name="Smith S."/>
            <person name="Utterback T.R."/>
            <person name="White O."/>
            <person name="Rubens C.E."/>
            <person name="Grandi G."/>
            <person name="Madoff L.C."/>
            <person name="Kasper D.L."/>
            <person name="Telford J.L."/>
            <person name="Wessels M.R."/>
            <person name="Rappuoli R."/>
            <person name="Fraser C.M."/>
        </authorList>
    </citation>
    <scope>NUCLEOTIDE SEQUENCE [LARGE SCALE GENOMIC DNA]</scope>
    <source>
        <strain>ATCC 27591 / A909 / CDC SS700</strain>
    </source>
</reference>
<dbReference type="EMBL" id="CP000114">
    <property type="protein sequence ID" value="ABA46300.1"/>
    <property type="molecule type" value="Genomic_DNA"/>
</dbReference>
<dbReference type="RefSeq" id="WP_000704976.1">
    <property type="nucleotide sequence ID" value="NC_007432.1"/>
</dbReference>
<dbReference type="SMR" id="Q3K2X2"/>
<dbReference type="KEGG" id="sak:SAK_0493"/>
<dbReference type="HOGENOM" id="CLU_066607_4_0_9"/>
<dbReference type="GO" id="GO:0005737">
    <property type="term" value="C:cytoplasm"/>
    <property type="evidence" value="ECO:0007669"/>
    <property type="project" value="UniProtKB-SubCell"/>
</dbReference>
<dbReference type="GO" id="GO:0006282">
    <property type="term" value="P:regulation of DNA repair"/>
    <property type="evidence" value="ECO:0007669"/>
    <property type="project" value="UniProtKB-UniRule"/>
</dbReference>
<dbReference type="Gene3D" id="1.10.10.10">
    <property type="entry name" value="Winged helix-like DNA-binding domain superfamily/Winged helix DNA-binding domain"/>
    <property type="match status" value="4"/>
</dbReference>
<dbReference type="HAMAP" id="MF_01114">
    <property type="entry name" value="RecX"/>
    <property type="match status" value="1"/>
</dbReference>
<dbReference type="InterPro" id="IPR053926">
    <property type="entry name" value="RecX_HTH_1st"/>
</dbReference>
<dbReference type="InterPro" id="IPR053924">
    <property type="entry name" value="RecX_HTH_2nd"/>
</dbReference>
<dbReference type="InterPro" id="IPR053925">
    <property type="entry name" value="RecX_HTH_3rd"/>
</dbReference>
<dbReference type="InterPro" id="IPR003783">
    <property type="entry name" value="Regulatory_RecX"/>
</dbReference>
<dbReference type="InterPro" id="IPR036388">
    <property type="entry name" value="WH-like_DNA-bd_sf"/>
</dbReference>
<dbReference type="NCBIfam" id="NF010733">
    <property type="entry name" value="PRK14135.1"/>
    <property type="match status" value="1"/>
</dbReference>
<dbReference type="PANTHER" id="PTHR33602">
    <property type="entry name" value="REGULATORY PROTEIN RECX FAMILY PROTEIN"/>
    <property type="match status" value="1"/>
</dbReference>
<dbReference type="PANTHER" id="PTHR33602:SF1">
    <property type="entry name" value="REGULATORY PROTEIN RECX FAMILY PROTEIN"/>
    <property type="match status" value="1"/>
</dbReference>
<dbReference type="Pfam" id="PF21982">
    <property type="entry name" value="RecX_HTH1"/>
    <property type="match status" value="1"/>
</dbReference>
<dbReference type="Pfam" id="PF02631">
    <property type="entry name" value="RecX_HTH2"/>
    <property type="match status" value="1"/>
</dbReference>
<dbReference type="Pfam" id="PF21981">
    <property type="entry name" value="RecX_HTH3"/>
    <property type="match status" value="1"/>
</dbReference>
<keyword id="KW-0963">Cytoplasm</keyword>
<evidence type="ECO:0000255" key="1">
    <source>
        <dbReference type="HAMAP-Rule" id="MF_01114"/>
    </source>
</evidence>
<protein>
    <recommendedName>
        <fullName evidence="1">Regulatory protein RecX</fullName>
    </recommendedName>
</protein>
<organism>
    <name type="scientific">Streptococcus agalactiae serotype Ia (strain ATCC 27591 / A909 / CDC SS700)</name>
    <dbReference type="NCBI Taxonomy" id="205921"/>
    <lineage>
        <taxon>Bacteria</taxon>
        <taxon>Bacillati</taxon>
        <taxon>Bacillota</taxon>
        <taxon>Bacilli</taxon>
        <taxon>Lactobacillales</taxon>
        <taxon>Streptococcaceae</taxon>
        <taxon>Streptococcus</taxon>
    </lineage>
</organism>
<sequence length="258" mass="30746">MKITKIEKKKRLYTLELDNTENLYITEDTIVHFMLSKGMIVNAEKLENIKKFAQLSYGKNLGLYYISFKQRTEKELIKYLQQHDIDSKIIPQIIDNLKSENWINDKNYVQSFIQQNLNTGDKGPYVIKQKLLQKGIKSKIIESELQAINFQDLASKISQKLYKKYQNKLPLKALKDKLMQSLTTKGFDYQIAHTVIQNLEIEKDQELEEDLIYKELDKQYQKFSKKYDQYELKQRIINALMRKGYQYEDIKSALREYL</sequence>
<comment type="function">
    <text evidence="1">Modulates RecA activity.</text>
</comment>
<comment type="subcellular location">
    <subcellularLocation>
        <location evidence="1">Cytoplasm</location>
    </subcellularLocation>
</comment>
<comment type="similarity">
    <text evidence="1">Belongs to the RecX family.</text>
</comment>
<name>RECX_STRA1</name>